<feature type="chain" id="PRO_0000321743" description="Ribosome maturation factor RimM">
    <location>
        <begin position="1"/>
        <end position="167"/>
    </location>
</feature>
<feature type="domain" description="PRC barrel" evidence="1">
    <location>
        <begin position="92"/>
        <end position="166"/>
    </location>
</feature>
<name>RIMM_PARDP</name>
<proteinExistence type="inferred from homology"/>
<protein>
    <recommendedName>
        <fullName evidence="1">Ribosome maturation factor RimM</fullName>
    </recommendedName>
</protein>
<dbReference type="EMBL" id="CP000490">
    <property type="protein sequence ID" value="ABL71948.1"/>
    <property type="molecule type" value="Genomic_DNA"/>
</dbReference>
<dbReference type="RefSeq" id="WP_011750115.1">
    <property type="nucleotide sequence ID" value="NC_008687.1"/>
</dbReference>
<dbReference type="SMR" id="A1B8V4"/>
<dbReference type="STRING" id="318586.Pden_3882"/>
<dbReference type="EnsemblBacteria" id="ABL71948">
    <property type="protein sequence ID" value="ABL71948"/>
    <property type="gene ID" value="Pden_3882"/>
</dbReference>
<dbReference type="GeneID" id="93453542"/>
<dbReference type="KEGG" id="pde:Pden_3882"/>
<dbReference type="eggNOG" id="COG0806">
    <property type="taxonomic scope" value="Bacteria"/>
</dbReference>
<dbReference type="HOGENOM" id="CLU_077636_0_1_5"/>
<dbReference type="OrthoDB" id="9788191at2"/>
<dbReference type="Proteomes" id="UP000000361">
    <property type="component" value="Chromosome 2"/>
</dbReference>
<dbReference type="GO" id="GO:0005737">
    <property type="term" value="C:cytoplasm"/>
    <property type="evidence" value="ECO:0007669"/>
    <property type="project" value="UniProtKB-SubCell"/>
</dbReference>
<dbReference type="GO" id="GO:0005840">
    <property type="term" value="C:ribosome"/>
    <property type="evidence" value="ECO:0007669"/>
    <property type="project" value="InterPro"/>
</dbReference>
<dbReference type="GO" id="GO:0043022">
    <property type="term" value="F:ribosome binding"/>
    <property type="evidence" value="ECO:0007669"/>
    <property type="project" value="InterPro"/>
</dbReference>
<dbReference type="GO" id="GO:0042274">
    <property type="term" value="P:ribosomal small subunit biogenesis"/>
    <property type="evidence" value="ECO:0007669"/>
    <property type="project" value="UniProtKB-UniRule"/>
</dbReference>
<dbReference type="GO" id="GO:0006364">
    <property type="term" value="P:rRNA processing"/>
    <property type="evidence" value="ECO:0007669"/>
    <property type="project" value="UniProtKB-UniRule"/>
</dbReference>
<dbReference type="Gene3D" id="2.30.30.240">
    <property type="entry name" value="PRC-barrel domain"/>
    <property type="match status" value="1"/>
</dbReference>
<dbReference type="Gene3D" id="2.40.30.60">
    <property type="entry name" value="RimM"/>
    <property type="match status" value="1"/>
</dbReference>
<dbReference type="HAMAP" id="MF_00014">
    <property type="entry name" value="Ribosome_mat_RimM"/>
    <property type="match status" value="1"/>
</dbReference>
<dbReference type="InterPro" id="IPR011033">
    <property type="entry name" value="PRC_barrel-like_sf"/>
</dbReference>
<dbReference type="InterPro" id="IPR056792">
    <property type="entry name" value="PRC_RimM"/>
</dbReference>
<dbReference type="InterPro" id="IPR011961">
    <property type="entry name" value="RimM"/>
</dbReference>
<dbReference type="InterPro" id="IPR002676">
    <property type="entry name" value="RimM_N"/>
</dbReference>
<dbReference type="InterPro" id="IPR036976">
    <property type="entry name" value="RimM_N_sf"/>
</dbReference>
<dbReference type="InterPro" id="IPR009000">
    <property type="entry name" value="Transl_B-barrel_sf"/>
</dbReference>
<dbReference type="NCBIfam" id="TIGR02273">
    <property type="entry name" value="16S_RimM"/>
    <property type="match status" value="1"/>
</dbReference>
<dbReference type="PANTHER" id="PTHR33692">
    <property type="entry name" value="RIBOSOME MATURATION FACTOR RIMM"/>
    <property type="match status" value="1"/>
</dbReference>
<dbReference type="PANTHER" id="PTHR33692:SF1">
    <property type="entry name" value="RIBOSOME MATURATION FACTOR RIMM"/>
    <property type="match status" value="1"/>
</dbReference>
<dbReference type="Pfam" id="PF24986">
    <property type="entry name" value="PRC_RimM"/>
    <property type="match status" value="1"/>
</dbReference>
<dbReference type="Pfam" id="PF01782">
    <property type="entry name" value="RimM"/>
    <property type="match status" value="1"/>
</dbReference>
<dbReference type="SUPFAM" id="SSF50346">
    <property type="entry name" value="PRC-barrel domain"/>
    <property type="match status" value="1"/>
</dbReference>
<dbReference type="SUPFAM" id="SSF50447">
    <property type="entry name" value="Translation proteins"/>
    <property type="match status" value="1"/>
</dbReference>
<sequence length="167" mass="17986">MTERVCVGAIAGAFGVRGEVRLKSFTSQPNDIAGYSPLYTEDGNRSFTIRLTRPVTGGLGARLSGVETREQAEALKGVTLWADRDKLPALPDDEFYHADLIGLSVYDTGGALLGKVRAIYDHGAGDILEIFGPGRRQVLLLPFTRAFVPTVDLAAGRIVADPPEEQE</sequence>
<organism>
    <name type="scientific">Paracoccus denitrificans (strain Pd 1222)</name>
    <dbReference type="NCBI Taxonomy" id="318586"/>
    <lineage>
        <taxon>Bacteria</taxon>
        <taxon>Pseudomonadati</taxon>
        <taxon>Pseudomonadota</taxon>
        <taxon>Alphaproteobacteria</taxon>
        <taxon>Rhodobacterales</taxon>
        <taxon>Paracoccaceae</taxon>
        <taxon>Paracoccus</taxon>
    </lineage>
</organism>
<reference key="1">
    <citation type="submission" date="2006-12" db="EMBL/GenBank/DDBJ databases">
        <title>Complete sequence of chromosome 2 of Paracoccus denitrificans PD1222.</title>
        <authorList>
            <person name="Copeland A."/>
            <person name="Lucas S."/>
            <person name="Lapidus A."/>
            <person name="Barry K."/>
            <person name="Detter J.C."/>
            <person name="Glavina del Rio T."/>
            <person name="Hammon N."/>
            <person name="Israni S."/>
            <person name="Dalin E."/>
            <person name="Tice H."/>
            <person name="Pitluck S."/>
            <person name="Munk A.C."/>
            <person name="Brettin T."/>
            <person name="Bruce D."/>
            <person name="Han C."/>
            <person name="Tapia R."/>
            <person name="Gilna P."/>
            <person name="Schmutz J."/>
            <person name="Larimer F."/>
            <person name="Land M."/>
            <person name="Hauser L."/>
            <person name="Kyrpides N."/>
            <person name="Lykidis A."/>
            <person name="Spiro S."/>
            <person name="Richardson D.J."/>
            <person name="Moir J.W.B."/>
            <person name="Ferguson S.J."/>
            <person name="van Spanning R.J.M."/>
            <person name="Richardson P."/>
        </authorList>
    </citation>
    <scope>NUCLEOTIDE SEQUENCE [LARGE SCALE GENOMIC DNA]</scope>
    <source>
        <strain>Pd 1222</strain>
    </source>
</reference>
<gene>
    <name evidence="1" type="primary">rimM</name>
    <name type="ordered locus">Pden_3882</name>
</gene>
<comment type="function">
    <text evidence="1">An accessory protein needed during the final step in the assembly of 30S ribosomal subunit, possibly for assembly of the head region. Essential for efficient processing of 16S rRNA. May be needed both before and after RbfA during the maturation of 16S rRNA. It has affinity for free ribosomal 30S subunits but not for 70S ribosomes.</text>
</comment>
<comment type="subunit">
    <text evidence="1">Binds ribosomal protein uS19.</text>
</comment>
<comment type="subcellular location">
    <subcellularLocation>
        <location evidence="1">Cytoplasm</location>
    </subcellularLocation>
</comment>
<comment type="domain">
    <text evidence="1">The PRC barrel domain binds ribosomal protein uS19.</text>
</comment>
<comment type="similarity">
    <text evidence="1">Belongs to the RimM family.</text>
</comment>
<evidence type="ECO:0000255" key="1">
    <source>
        <dbReference type="HAMAP-Rule" id="MF_00014"/>
    </source>
</evidence>
<keyword id="KW-0143">Chaperone</keyword>
<keyword id="KW-0963">Cytoplasm</keyword>
<keyword id="KW-1185">Reference proteome</keyword>
<keyword id="KW-0690">Ribosome biogenesis</keyword>
<keyword id="KW-0698">rRNA processing</keyword>
<accession>A1B8V4</accession>